<reference key="1">
    <citation type="journal article" date="2015" name="Genome Announc.">
        <title>Draft genome sequence of the cellulolytic fungus Chaetomium globosum.</title>
        <authorList>
            <person name="Cuomo C.A."/>
            <person name="Untereiner W.A."/>
            <person name="Ma L.-J."/>
            <person name="Grabherr M."/>
            <person name="Birren B.W."/>
        </authorList>
    </citation>
    <scope>NUCLEOTIDE SEQUENCE [LARGE SCALE GENOMIC DNA]</scope>
    <source>
        <strain>ATCC 6205 / CBS 148.51 / DSM 1962 / NBRC 6347 / NRRL 1970</strain>
    </source>
</reference>
<protein>
    <recommendedName>
        <fullName>Mediator of RNA polymerase II transcription subunit 8</fullName>
    </recommendedName>
    <alternativeName>
        <fullName>Mediator complex subunit 8</fullName>
    </alternativeName>
</protein>
<proteinExistence type="inferred from homology"/>
<dbReference type="EMBL" id="CH408029">
    <property type="protein sequence ID" value="EAQ93533.1"/>
    <property type="molecule type" value="Genomic_DNA"/>
</dbReference>
<dbReference type="RefSeq" id="XP_001220989.1">
    <property type="nucleotide sequence ID" value="XM_001220988.1"/>
</dbReference>
<dbReference type="SMR" id="Q2HDD6"/>
<dbReference type="STRING" id="306901.Q2HDD6"/>
<dbReference type="GeneID" id="4386751"/>
<dbReference type="VEuPathDB" id="FungiDB:CHGG_01768"/>
<dbReference type="eggNOG" id="ENOG502S8U1">
    <property type="taxonomic scope" value="Eukaryota"/>
</dbReference>
<dbReference type="HOGENOM" id="CLU_074399_0_0_1"/>
<dbReference type="InParanoid" id="Q2HDD6"/>
<dbReference type="OMA" id="WAPIEAN"/>
<dbReference type="OrthoDB" id="5329317at2759"/>
<dbReference type="Proteomes" id="UP000001056">
    <property type="component" value="Unassembled WGS sequence"/>
</dbReference>
<dbReference type="GO" id="GO:0070847">
    <property type="term" value="C:core mediator complex"/>
    <property type="evidence" value="ECO:0007669"/>
    <property type="project" value="TreeGrafter"/>
</dbReference>
<dbReference type="GO" id="GO:0016592">
    <property type="term" value="C:mediator complex"/>
    <property type="evidence" value="ECO:0007669"/>
    <property type="project" value="InterPro"/>
</dbReference>
<dbReference type="GO" id="GO:0000978">
    <property type="term" value="F:RNA polymerase II cis-regulatory region sequence-specific DNA binding"/>
    <property type="evidence" value="ECO:0007669"/>
    <property type="project" value="TreeGrafter"/>
</dbReference>
<dbReference type="GO" id="GO:0003712">
    <property type="term" value="F:transcription coregulator activity"/>
    <property type="evidence" value="ECO:0007669"/>
    <property type="project" value="InterPro"/>
</dbReference>
<dbReference type="GO" id="GO:0006357">
    <property type="term" value="P:regulation of transcription by RNA polymerase II"/>
    <property type="evidence" value="ECO:0007669"/>
    <property type="project" value="InterPro"/>
</dbReference>
<dbReference type="Gene3D" id="1.20.58.1710">
    <property type="match status" value="1"/>
</dbReference>
<dbReference type="Gene3D" id="6.10.250.2610">
    <property type="match status" value="1"/>
</dbReference>
<dbReference type="InterPro" id="IPR019364">
    <property type="entry name" value="Mediatior_Med8_fun/met"/>
</dbReference>
<dbReference type="PANTHER" id="PTHR13074">
    <property type="entry name" value="MEDIATOR OF RNA POLYMERASE II TRANSCRIPTION SUBUNIT 8"/>
    <property type="match status" value="1"/>
</dbReference>
<dbReference type="PANTHER" id="PTHR13074:SF9">
    <property type="entry name" value="MEDIATOR OF RNA POLYMERASE II TRANSCRIPTION SUBUNIT 8"/>
    <property type="match status" value="1"/>
</dbReference>
<dbReference type="Pfam" id="PF10232">
    <property type="entry name" value="Med8"/>
    <property type="match status" value="1"/>
</dbReference>
<comment type="function">
    <text evidence="1">Component of the Mediator complex, a coactivator involved in the regulated transcription of nearly all RNA polymerase II-dependent genes. Mediator functions as a bridge to convey information from gene-specific regulatory proteins to the basal RNA polymerase II transcription machinery. Mediator is recruited to promoters by direct interactions with regulatory proteins and serves as a scaffold for the assembly of a functional preinitiation complex with RNA polymerase II and the general transcription factors (By similarity).</text>
</comment>
<comment type="subunit">
    <text evidence="1">Component of the Mediator complex.</text>
</comment>
<comment type="subcellular location">
    <subcellularLocation>
        <location evidence="4">Nucleus</location>
    </subcellularLocation>
</comment>
<comment type="similarity">
    <text evidence="4">Belongs to the Mediator complex subunit 8 family.</text>
</comment>
<name>MED8_CHAGB</name>
<accession>Q2HDD6</accession>
<keyword id="KW-0010">Activator</keyword>
<keyword id="KW-0175">Coiled coil</keyword>
<keyword id="KW-0539">Nucleus</keyword>
<keyword id="KW-1185">Reference proteome</keyword>
<keyword id="KW-0804">Transcription</keyword>
<keyword id="KW-0805">Transcription regulation</keyword>
<feature type="chain" id="PRO_0000304540" description="Mediator of RNA polymerase II transcription subunit 8">
    <location>
        <begin position="1"/>
        <end position="288"/>
    </location>
</feature>
<feature type="region of interest" description="Disordered" evidence="3">
    <location>
        <begin position="122"/>
        <end position="150"/>
    </location>
</feature>
<feature type="region of interest" description="Disordered" evidence="3">
    <location>
        <begin position="191"/>
        <end position="245"/>
    </location>
</feature>
<feature type="region of interest" description="Disordered" evidence="3">
    <location>
        <begin position="266"/>
        <end position="288"/>
    </location>
</feature>
<feature type="coiled-coil region" evidence="2">
    <location>
        <begin position="4"/>
        <end position="58"/>
    </location>
</feature>
<feature type="coiled-coil region" evidence="2">
    <location>
        <begin position="180"/>
        <end position="228"/>
    </location>
</feature>
<feature type="compositionally biased region" description="Acidic residues" evidence="3">
    <location>
        <begin position="131"/>
        <end position="148"/>
    </location>
</feature>
<feature type="compositionally biased region" description="Acidic residues" evidence="3">
    <location>
        <begin position="200"/>
        <end position="221"/>
    </location>
</feature>
<feature type="compositionally biased region" description="Gly residues" evidence="3">
    <location>
        <begin position="227"/>
        <end position="245"/>
    </location>
</feature>
<evidence type="ECO:0000250" key="1"/>
<evidence type="ECO:0000255" key="2"/>
<evidence type="ECO:0000256" key="3">
    <source>
        <dbReference type="SAM" id="MobiDB-lite"/>
    </source>
</evidence>
<evidence type="ECO:0000305" key="4"/>
<sequence>MSPEELKQLELLRNRFAQLTSNLGSLRTSVSNSNPLPTYESLQASVNILQANIRSIQDIATENAGLFQRLAIHPSTNFPGRTQEHILTQLLRKKLEPNVESWVEEARATARGVGVDASKLAGGVHRRGEHDYDDEGTYGMDEDGDDAPQDPFSEQWADMLDNFQQTLQQYVTVQVKKKYTAEERAAGIENVRTGLRQTLEESEDDDEDEEEEEEDEEEDEAAAAAGNAGGLATGAGGSAAAGGGMFGAIEPEHIFYLQAQGNLQLPGNVPIESKRIQTVPTRRVAPPR</sequence>
<organism>
    <name type="scientific">Chaetomium globosum (strain ATCC 6205 / CBS 148.51 / DSM 1962 / NBRC 6347 / NRRL 1970)</name>
    <name type="common">Soil fungus</name>
    <dbReference type="NCBI Taxonomy" id="306901"/>
    <lineage>
        <taxon>Eukaryota</taxon>
        <taxon>Fungi</taxon>
        <taxon>Dikarya</taxon>
        <taxon>Ascomycota</taxon>
        <taxon>Pezizomycotina</taxon>
        <taxon>Sordariomycetes</taxon>
        <taxon>Sordariomycetidae</taxon>
        <taxon>Sordariales</taxon>
        <taxon>Chaetomiaceae</taxon>
        <taxon>Chaetomium</taxon>
    </lineage>
</organism>
<gene>
    <name type="primary">MED8</name>
    <name type="ORF">CHGG_01768</name>
</gene>